<feature type="chain" id="PRO_0000294150" description="NTPase KAP family P-loop domain-containing protein 1">
    <location>
        <begin position="1"/>
        <end position="610"/>
    </location>
</feature>
<feature type="transmembrane region" description="Helical" evidence="1">
    <location>
        <begin position="22"/>
        <end position="42"/>
    </location>
</feature>
<feature type="transmembrane region" description="Helical" evidence="1">
    <location>
        <begin position="118"/>
        <end position="138"/>
    </location>
</feature>
<feature type="transmembrane region" description="Helical" evidence="1">
    <location>
        <begin position="157"/>
        <end position="177"/>
    </location>
</feature>
<feature type="domain" description="KAP NTPase">
    <location>
        <begin position="1"/>
        <end position="414"/>
    </location>
</feature>
<feature type="region of interest" description="Disordered" evidence="2">
    <location>
        <begin position="540"/>
        <end position="587"/>
    </location>
</feature>
<feature type="compositionally biased region" description="Low complexity" evidence="2">
    <location>
        <begin position="560"/>
        <end position="575"/>
    </location>
</feature>
<feature type="sequence variant" id="VAR_033146" description="In dbSNP:rs3810144.">
    <original>V</original>
    <variation>L</variation>
    <location>
        <position position="118"/>
    </location>
</feature>
<feature type="sequence conflict" description="In Ref. 1; BAC03547." evidence="3" ref="1">
    <original>R</original>
    <variation>H</variation>
    <location>
        <position position="336"/>
    </location>
</feature>
<feature type="sequence conflict" description="In Ref. 1; BAC03547." evidence="3" ref="1">
    <original>A</original>
    <variation>E</variation>
    <location>
        <position position="461"/>
    </location>
</feature>
<keyword id="KW-0472">Membrane</keyword>
<keyword id="KW-1267">Proteomics identification</keyword>
<keyword id="KW-1185">Reference proteome</keyword>
<keyword id="KW-0812">Transmembrane</keyword>
<keyword id="KW-1133">Transmembrane helix</keyword>
<reference key="1">
    <citation type="journal article" date="2004" name="Nat. Genet.">
        <title>Complete sequencing and characterization of 21,243 full-length human cDNAs.</title>
        <authorList>
            <person name="Ota T."/>
            <person name="Suzuki Y."/>
            <person name="Nishikawa T."/>
            <person name="Otsuki T."/>
            <person name="Sugiyama T."/>
            <person name="Irie R."/>
            <person name="Wakamatsu A."/>
            <person name="Hayashi K."/>
            <person name="Sato H."/>
            <person name="Nagai K."/>
            <person name="Kimura K."/>
            <person name="Makita H."/>
            <person name="Sekine M."/>
            <person name="Obayashi M."/>
            <person name="Nishi T."/>
            <person name="Shibahara T."/>
            <person name="Tanaka T."/>
            <person name="Ishii S."/>
            <person name="Yamamoto J."/>
            <person name="Saito K."/>
            <person name="Kawai Y."/>
            <person name="Isono Y."/>
            <person name="Nakamura Y."/>
            <person name="Nagahari K."/>
            <person name="Murakami K."/>
            <person name="Yasuda T."/>
            <person name="Iwayanagi T."/>
            <person name="Wagatsuma M."/>
            <person name="Shiratori A."/>
            <person name="Sudo H."/>
            <person name="Hosoiri T."/>
            <person name="Kaku Y."/>
            <person name="Kodaira H."/>
            <person name="Kondo H."/>
            <person name="Sugawara M."/>
            <person name="Takahashi M."/>
            <person name="Kanda K."/>
            <person name="Yokoi T."/>
            <person name="Furuya T."/>
            <person name="Kikkawa E."/>
            <person name="Omura Y."/>
            <person name="Abe K."/>
            <person name="Kamihara K."/>
            <person name="Katsuta N."/>
            <person name="Sato K."/>
            <person name="Tanikawa M."/>
            <person name="Yamazaki M."/>
            <person name="Ninomiya K."/>
            <person name="Ishibashi T."/>
            <person name="Yamashita H."/>
            <person name="Murakawa K."/>
            <person name="Fujimori K."/>
            <person name="Tanai H."/>
            <person name="Kimata M."/>
            <person name="Watanabe M."/>
            <person name="Hiraoka S."/>
            <person name="Chiba Y."/>
            <person name="Ishida S."/>
            <person name="Ono Y."/>
            <person name="Takiguchi S."/>
            <person name="Watanabe S."/>
            <person name="Yosida M."/>
            <person name="Hotuta T."/>
            <person name="Kusano J."/>
            <person name="Kanehori K."/>
            <person name="Takahashi-Fujii A."/>
            <person name="Hara H."/>
            <person name="Tanase T.-O."/>
            <person name="Nomura Y."/>
            <person name="Togiya S."/>
            <person name="Komai F."/>
            <person name="Hara R."/>
            <person name="Takeuchi K."/>
            <person name="Arita M."/>
            <person name="Imose N."/>
            <person name="Musashino K."/>
            <person name="Yuuki H."/>
            <person name="Oshima A."/>
            <person name="Sasaki N."/>
            <person name="Aotsuka S."/>
            <person name="Yoshikawa Y."/>
            <person name="Matsunawa H."/>
            <person name="Ichihara T."/>
            <person name="Shiohata N."/>
            <person name="Sano S."/>
            <person name="Moriya S."/>
            <person name="Momiyama H."/>
            <person name="Satoh N."/>
            <person name="Takami S."/>
            <person name="Terashima Y."/>
            <person name="Suzuki O."/>
            <person name="Nakagawa S."/>
            <person name="Senoh A."/>
            <person name="Mizoguchi H."/>
            <person name="Goto Y."/>
            <person name="Shimizu F."/>
            <person name="Wakebe H."/>
            <person name="Hishigaki H."/>
            <person name="Watanabe T."/>
            <person name="Sugiyama A."/>
            <person name="Takemoto M."/>
            <person name="Kawakami B."/>
            <person name="Yamazaki M."/>
            <person name="Watanabe K."/>
            <person name="Kumagai A."/>
            <person name="Itakura S."/>
            <person name="Fukuzumi Y."/>
            <person name="Fujimori Y."/>
            <person name="Komiyama M."/>
            <person name="Tashiro H."/>
            <person name="Tanigami A."/>
            <person name="Fujiwara T."/>
            <person name="Ono T."/>
            <person name="Yamada K."/>
            <person name="Fujii Y."/>
            <person name="Ozaki K."/>
            <person name="Hirao M."/>
            <person name="Ohmori Y."/>
            <person name="Kawabata A."/>
            <person name="Hikiji T."/>
            <person name="Kobatake N."/>
            <person name="Inagaki H."/>
            <person name="Ikema Y."/>
            <person name="Okamoto S."/>
            <person name="Okitani R."/>
            <person name="Kawakami T."/>
            <person name="Noguchi S."/>
            <person name="Itoh T."/>
            <person name="Shigeta K."/>
            <person name="Senba T."/>
            <person name="Matsumura K."/>
            <person name="Nakajima Y."/>
            <person name="Mizuno T."/>
            <person name="Morinaga M."/>
            <person name="Sasaki M."/>
            <person name="Togashi T."/>
            <person name="Oyama M."/>
            <person name="Hata H."/>
            <person name="Watanabe M."/>
            <person name="Komatsu T."/>
            <person name="Mizushima-Sugano J."/>
            <person name="Satoh T."/>
            <person name="Shirai Y."/>
            <person name="Takahashi Y."/>
            <person name="Nakagawa K."/>
            <person name="Okumura K."/>
            <person name="Nagase T."/>
            <person name="Nomura N."/>
            <person name="Kikuchi H."/>
            <person name="Masuho Y."/>
            <person name="Yamashita R."/>
            <person name="Nakai K."/>
            <person name="Yada T."/>
            <person name="Nakamura Y."/>
            <person name="Ohara O."/>
            <person name="Isogai T."/>
            <person name="Sugano S."/>
        </authorList>
    </citation>
    <scope>NUCLEOTIDE SEQUENCE [LARGE SCALE MRNA]</scope>
    <source>
        <tissue>Amygdala</tissue>
    </source>
</reference>
<reference key="2">
    <citation type="journal article" date="2004" name="Nature">
        <title>The DNA sequence and biology of human chromosome 19.</title>
        <authorList>
            <person name="Grimwood J."/>
            <person name="Gordon L.A."/>
            <person name="Olsen A.S."/>
            <person name="Terry A."/>
            <person name="Schmutz J."/>
            <person name="Lamerdin J.E."/>
            <person name="Hellsten U."/>
            <person name="Goodstein D."/>
            <person name="Couronne O."/>
            <person name="Tran-Gyamfi M."/>
            <person name="Aerts A."/>
            <person name="Altherr M."/>
            <person name="Ashworth L."/>
            <person name="Bajorek E."/>
            <person name="Black S."/>
            <person name="Branscomb E."/>
            <person name="Caenepeel S."/>
            <person name="Carrano A.V."/>
            <person name="Caoile C."/>
            <person name="Chan Y.M."/>
            <person name="Christensen M."/>
            <person name="Cleland C.A."/>
            <person name="Copeland A."/>
            <person name="Dalin E."/>
            <person name="Dehal P."/>
            <person name="Denys M."/>
            <person name="Detter J.C."/>
            <person name="Escobar J."/>
            <person name="Flowers D."/>
            <person name="Fotopulos D."/>
            <person name="Garcia C."/>
            <person name="Georgescu A.M."/>
            <person name="Glavina T."/>
            <person name="Gomez M."/>
            <person name="Gonzales E."/>
            <person name="Groza M."/>
            <person name="Hammon N."/>
            <person name="Hawkins T."/>
            <person name="Haydu L."/>
            <person name="Ho I."/>
            <person name="Huang W."/>
            <person name="Israni S."/>
            <person name="Jett J."/>
            <person name="Kadner K."/>
            <person name="Kimball H."/>
            <person name="Kobayashi A."/>
            <person name="Larionov V."/>
            <person name="Leem S.-H."/>
            <person name="Lopez F."/>
            <person name="Lou Y."/>
            <person name="Lowry S."/>
            <person name="Malfatti S."/>
            <person name="Martinez D."/>
            <person name="McCready P.M."/>
            <person name="Medina C."/>
            <person name="Morgan J."/>
            <person name="Nelson K."/>
            <person name="Nolan M."/>
            <person name="Ovcharenko I."/>
            <person name="Pitluck S."/>
            <person name="Pollard M."/>
            <person name="Popkie A.P."/>
            <person name="Predki P."/>
            <person name="Quan G."/>
            <person name="Ramirez L."/>
            <person name="Rash S."/>
            <person name="Retterer J."/>
            <person name="Rodriguez A."/>
            <person name="Rogers S."/>
            <person name="Salamov A."/>
            <person name="Salazar A."/>
            <person name="She X."/>
            <person name="Smith D."/>
            <person name="Slezak T."/>
            <person name="Solovyev V."/>
            <person name="Thayer N."/>
            <person name="Tice H."/>
            <person name="Tsai M."/>
            <person name="Ustaszewska A."/>
            <person name="Vo N."/>
            <person name="Wagner M."/>
            <person name="Wheeler J."/>
            <person name="Wu K."/>
            <person name="Xie G."/>
            <person name="Yang J."/>
            <person name="Dubchak I."/>
            <person name="Furey T.S."/>
            <person name="DeJong P."/>
            <person name="Dickson M."/>
            <person name="Gordon D."/>
            <person name="Eichler E.E."/>
            <person name="Pennacchio L.A."/>
            <person name="Richardson P."/>
            <person name="Stubbs L."/>
            <person name="Rokhsar D.S."/>
            <person name="Myers R.M."/>
            <person name="Rubin E.M."/>
            <person name="Lucas S.M."/>
        </authorList>
    </citation>
    <scope>NUCLEOTIDE SEQUENCE [LARGE SCALE GENOMIC DNA]</scope>
</reference>
<reference key="3">
    <citation type="journal article" date="2004" name="Genome Res.">
        <title>The status, quality, and expansion of the NIH full-length cDNA project: the Mammalian Gene Collection (MGC).</title>
        <authorList>
            <consortium name="The MGC Project Team"/>
        </authorList>
    </citation>
    <scope>NUCLEOTIDE SEQUENCE [LARGE SCALE MRNA]</scope>
</reference>
<evidence type="ECO:0000255" key="1"/>
<evidence type="ECO:0000256" key="2">
    <source>
        <dbReference type="SAM" id="MobiDB-lite"/>
    </source>
</evidence>
<evidence type="ECO:0000305" key="3"/>
<proteinExistence type="evidence at protein level"/>
<protein>
    <recommendedName>
        <fullName>NTPase KAP family P-loop domain-containing protein 1</fullName>
    </recommendedName>
</protein>
<gene>
    <name type="primary">NKPD1</name>
</gene>
<name>NKPD1_HUMAN</name>
<accession>Q17RQ9</accession>
<accession>B7ZLG6</accession>
<accession>D6RH15</accession>
<accession>Q8N2A2</accession>
<sequence length="610" mass="67780">MQQEAAQRESEELQHVQWRPRAVSGWGVPQLLWYLVFLQPIITEVHLRRRNVQFLFIRFSAWQYAGTDKLWAGLVTTLCEGIRRHYGALPFSVYSVLGNKPATRQDCCQSEWHCRRRVCLGLLALLAALGLGVGLLYLSLGGHALGHGSPSGSLLKVFGGAATTLSGSGLLMAVYSVGKHLFVSQRKKIERLVSREKFGSQLGFMCEVKKEVELLTDFLCFLEIYQRRRLRVVLEVTGLDTCYPERVVGVLNAINTLLSDSHAPFIFILVVDPSILAACLESAGNMKGTADNGYLFLNRTVTLPFSVPIMGRRTKLQFLHDAVQSRDDLLYREMTRKPWLPGDAGGESAQLLAVQAQAGTERGQGRIDDEAARRIQEALFCLHDERDCLYEYVPDNVVSMRRIVNTVPITVRLLQQQQQQGDFGGPTPRQAVAWVVLANQWPCRLSWALQCLEDRQQTGGAPEGRARLWDVFRDNSRELHTMTKALQNVLDLDGDPELFERFLGADFPFTVAEAQSLLRCTVNLDHSIRRRMGLIRAVSALKPPSPPKSPTRDTPHAAHRANSASRAPPSGRASGQAGEGHHTGDLAHRGKLWPVACALFRPGQSSPGGP</sequence>
<comment type="subcellular location">
    <subcellularLocation>
        <location evidence="3">Membrane</location>
        <topology evidence="3">Multi-pass membrane protein</topology>
    </subcellularLocation>
</comment>
<comment type="sequence caution" evidence="3">
    <conflict type="miscellaneous discrepancy">
        <sequence resource="EMBL-CDS" id="BAC03547"/>
    </conflict>
    <text>Contaminating sequence.</text>
</comment>
<dbReference type="EMBL" id="AK090919">
    <property type="protein sequence ID" value="BAC03547.1"/>
    <property type="status" value="ALT_SEQ"/>
    <property type="molecule type" value="mRNA"/>
</dbReference>
<dbReference type="EMBL" id="AC005757">
    <property type="status" value="NOT_ANNOTATED_CDS"/>
    <property type="molecule type" value="Genomic_DNA"/>
</dbReference>
<dbReference type="EMBL" id="BC117228">
    <property type="protein sequence ID" value="AAI17229.1"/>
    <property type="molecule type" value="mRNA"/>
</dbReference>
<dbReference type="EMBL" id="BC143792">
    <property type="protein sequence ID" value="AAI43793.1"/>
    <property type="molecule type" value="mRNA"/>
</dbReference>
<dbReference type="FunCoup" id="Q17RQ9">
    <property type="interactions" value="9"/>
</dbReference>
<dbReference type="STRING" id="9606.ENSP00000321976"/>
<dbReference type="GlyGen" id="Q17RQ9">
    <property type="glycosylation" value="2 sites, 1 O-linked glycan (1 site)"/>
</dbReference>
<dbReference type="iPTMnet" id="Q17RQ9"/>
<dbReference type="PhosphoSitePlus" id="Q17RQ9"/>
<dbReference type="BioMuta" id="NKPD1"/>
<dbReference type="DMDM" id="121945557"/>
<dbReference type="MassIVE" id="Q17RQ9"/>
<dbReference type="PaxDb" id="9606-ENSP00000321976"/>
<dbReference type="PeptideAtlas" id="Q17RQ9"/>
<dbReference type="ProteomicsDB" id="61162"/>
<dbReference type="Antibodypedia" id="49151">
    <property type="antibodies" value="68 antibodies from 12 providers"/>
</dbReference>
<dbReference type="Ensembl" id="ENST00000589776.1">
    <property type="protein sequence ID" value="ENSP00000468649.1"/>
    <property type="gene ID" value="ENSG00000179846.11"/>
</dbReference>
<dbReference type="UCSC" id="uc021uvt.1">
    <property type="organism name" value="human"/>
</dbReference>
<dbReference type="AGR" id="HGNC:24739"/>
<dbReference type="GeneCards" id="NKPD1"/>
<dbReference type="HGNC" id="HGNC:24739">
    <property type="gene designation" value="NKPD1"/>
</dbReference>
<dbReference type="HPA" id="ENSG00000179846">
    <property type="expression patterns" value="Tissue enriched (skin)"/>
</dbReference>
<dbReference type="neXtProt" id="NX_Q17RQ9"/>
<dbReference type="OpenTargets" id="ENSG00000179846"/>
<dbReference type="PharmGKB" id="PA134993651"/>
<dbReference type="VEuPathDB" id="HostDB:ENSG00000179846"/>
<dbReference type="eggNOG" id="KOG0502">
    <property type="taxonomic scope" value="Eukaryota"/>
</dbReference>
<dbReference type="GeneTree" id="ENSGT00650000093443"/>
<dbReference type="HOGENOM" id="CLU_025247_1_0_1"/>
<dbReference type="InParanoid" id="Q17RQ9"/>
<dbReference type="OMA" id="RQREWHC"/>
<dbReference type="OrthoDB" id="10015264at2759"/>
<dbReference type="PAN-GO" id="Q17RQ9">
    <property type="GO annotations" value="0 GO annotations based on evolutionary models"/>
</dbReference>
<dbReference type="PhylomeDB" id="Q17RQ9"/>
<dbReference type="PathwayCommons" id="Q17RQ9"/>
<dbReference type="Pharos" id="Q17RQ9">
    <property type="development level" value="Tdark"/>
</dbReference>
<dbReference type="PRO" id="PR:Q17RQ9"/>
<dbReference type="Proteomes" id="UP000005640">
    <property type="component" value="Chromosome 19"/>
</dbReference>
<dbReference type="RNAct" id="Q17RQ9">
    <property type="molecule type" value="protein"/>
</dbReference>
<dbReference type="Bgee" id="ENSG00000179846">
    <property type="expression patterns" value="Expressed in skin of abdomen and 67 other cell types or tissues"/>
</dbReference>
<dbReference type="GO" id="GO:0016020">
    <property type="term" value="C:membrane"/>
    <property type="evidence" value="ECO:0007669"/>
    <property type="project" value="UniProtKB-SubCell"/>
</dbReference>
<dbReference type="InterPro" id="IPR011646">
    <property type="entry name" value="KAP_P-loop"/>
</dbReference>
<dbReference type="InterPro" id="IPR052754">
    <property type="entry name" value="NTPase_KAP_P-loop"/>
</dbReference>
<dbReference type="PANTHER" id="PTHR22674:SF4">
    <property type="entry name" value="NTPASE KAP FAMILY P-LOOP DOMAIN-CONTAINING PROTEIN 1"/>
    <property type="match status" value="1"/>
</dbReference>
<dbReference type="PANTHER" id="PTHR22674">
    <property type="entry name" value="NTPASE, KAP FAMILY P-LOOP DOMAIN-CONTAINING 1"/>
    <property type="match status" value="1"/>
</dbReference>
<dbReference type="Pfam" id="PF07693">
    <property type="entry name" value="KAP_NTPase"/>
    <property type="match status" value="1"/>
</dbReference>
<organism>
    <name type="scientific">Homo sapiens</name>
    <name type="common">Human</name>
    <dbReference type="NCBI Taxonomy" id="9606"/>
    <lineage>
        <taxon>Eukaryota</taxon>
        <taxon>Metazoa</taxon>
        <taxon>Chordata</taxon>
        <taxon>Craniata</taxon>
        <taxon>Vertebrata</taxon>
        <taxon>Euteleostomi</taxon>
        <taxon>Mammalia</taxon>
        <taxon>Eutheria</taxon>
        <taxon>Euarchontoglires</taxon>
        <taxon>Primates</taxon>
        <taxon>Haplorrhini</taxon>
        <taxon>Catarrhini</taxon>
        <taxon>Hominidae</taxon>
        <taxon>Homo</taxon>
    </lineage>
</organism>